<reference key="1">
    <citation type="journal article" date="1997" name="Genome Res.">
        <title>Large-scale concatenation cDNA sequencing.</title>
        <authorList>
            <person name="Yu W."/>
            <person name="Andersson B."/>
            <person name="Worley K.C."/>
            <person name="Muzny D.M."/>
            <person name="Ding Y."/>
            <person name="Liu W."/>
            <person name="Ricafrente J.Y."/>
            <person name="Wentland M.A."/>
            <person name="Lennon G."/>
            <person name="Gibbs R.A."/>
        </authorList>
    </citation>
    <scope>NUCLEOTIDE SEQUENCE [LARGE SCALE MRNA]</scope>
    <source>
        <tissue>Brain</tissue>
    </source>
</reference>
<reference key="2">
    <citation type="submission" date="2004-06" db="EMBL/GenBank/DDBJ databases">
        <title>Cloning of human full open reading frames in Gateway(TM) system entry vector (pDONR201).</title>
        <authorList>
            <person name="Ebert L."/>
            <person name="Schick M."/>
            <person name="Neubert P."/>
            <person name="Schatten R."/>
            <person name="Henze S."/>
            <person name="Korn B."/>
        </authorList>
    </citation>
    <scope>NUCLEOTIDE SEQUENCE [LARGE SCALE MRNA]</scope>
</reference>
<reference key="3">
    <citation type="journal article" date="2006" name="Nature">
        <title>The finished DNA sequence of human chromosome 12.</title>
        <authorList>
            <person name="Scherer S.E."/>
            <person name="Muzny D.M."/>
            <person name="Buhay C.J."/>
            <person name="Chen R."/>
            <person name="Cree A."/>
            <person name="Ding Y."/>
            <person name="Dugan-Rocha S."/>
            <person name="Gill R."/>
            <person name="Gunaratne P."/>
            <person name="Harris R.A."/>
            <person name="Hawes A.C."/>
            <person name="Hernandez J."/>
            <person name="Hodgson A.V."/>
            <person name="Hume J."/>
            <person name="Jackson A."/>
            <person name="Khan Z.M."/>
            <person name="Kovar-Smith C."/>
            <person name="Lewis L.R."/>
            <person name="Lozado R.J."/>
            <person name="Metzker M.L."/>
            <person name="Milosavljevic A."/>
            <person name="Miner G.R."/>
            <person name="Montgomery K.T."/>
            <person name="Morgan M.B."/>
            <person name="Nazareth L.V."/>
            <person name="Scott G."/>
            <person name="Sodergren E."/>
            <person name="Song X.-Z."/>
            <person name="Steffen D."/>
            <person name="Lovering R.C."/>
            <person name="Wheeler D.A."/>
            <person name="Worley K.C."/>
            <person name="Yuan Y."/>
            <person name="Zhang Z."/>
            <person name="Adams C.Q."/>
            <person name="Ansari-Lari M.A."/>
            <person name="Ayele M."/>
            <person name="Brown M.J."/>
            <person name="Chen G."/>
            <person name="Chen Z."/>
            <person name="Clerc-Blankenburg K.P."/>
            <person name="Davis C."/>
            <person name="Delgado O."/>
            <person name="Dinh H.H."/>
            <person name="Draper H."/>
            <person name="Gonzalez-Garay M.L."/>
            <person name="Havlak P."/>
            <person name="Jackson L.R."/>
            <person name="Jacob L.S."/>
            <person name="Kelly S.H."/>
            <person name="Li L."/>
            <person name="Li Z."/>
            <person name="Liu J."/>
            <person name="Liu W."/>
            <person name="Lu J."/>
            <person name="Maheshwari M."/>
            <person name="Nguyen B.-V."/>
            <person name="Okwuonu G.O."/>
            <person name="Pasternak S."/>
            <person name="Perez L.M."/>
            <person name="Plopper F.J.H."/>
            <person name="Santibanez J."/>
            <person name="Shen H."/>
            <person name="Tabor P.E."/>
            <person name="Verduzco D."/>
            <person name="Waldron L."/>
            <person name="Wang Q."/>
            <person name="Williams G.A."/>
            <person name="Zhang J."/>
            <person name="Zhou J."/>
            <person name="Allen C.C."/>
            <person name="Amin A.G."/>
            <person name="Anyalebechi V."/>
            <person name="Bailey M."/>
            <person name="Barbaria J.A."/>
            <person name="Bimage K.E."/>
            <person name="Bryant N.P."/>
            <person name="Burch P.E."/>
            <person name="Burkett C.E."/>
            <person name="Burrell K.L."/>
            <person name="Calderon E."/>
            <person name="Cardenas V."/>
            <person name="Carter K."/>
            <person name="Casias K."/>
            <person name="Cavazos I."/>
            <person name="Cavazos S.R."/>
            <person name="Ceasar H."/>
            <person name="Chacko J."/>
            <person name="Chan S.N."/>
            <person name="Chavez D."/>
            <person name="Christopoulos C."/>
            <person name="Chu J."/>
            <person name="Cockrell R."/>
            <person name="Cox C.D."/>
            <person name="Dang M."/>
            <person name="Dathorne S.R."/>
            <person name="David R."/>
            <person name="Davis C.M."/>
            <person name="Davy-Carroll L."/>
            <person name="Deshazo D.R."/>
            <person name="Donlin J.E."/>
            <person name="D'Souza L."/>
            <person name="Eaves K.A."/>
            <person name="Egan A."/>
            <person name="Emery-Cohen A.J."/>
            <person name="Escotto M."/>
            <person name="Flagg N."/>
            <person name="Forbes L.D."/>
            <person name="Gabisi A.M."/>
            <person name="Garza M."/>
            <person name="Hamilton C."/>
            <person name="Henderson N."/>
            <person name="Hernandez O."/>
            <person name="Hines S."/>
            <person name="Hogues M.E."/>
            <person name="Huang M."/>
            <person name="Idlebird D.G."/>
            <person name="Johnson R."/>
            <person name="Jolivet A."/>
            <person name="Jones S."/>
            <person name="Kagan R."/>
            <person name="King L.M."/>
            <person name="Leal B."/>
            <person name="Lebow H."/>
            <person name="Lee S."/>
            <person name="LeVan J.M."/>
            <person name="Lewis L.C."/>
            <person name="London P."/>
            <person name="Lorensuhewa L.M."/>
            <person name="Loulseged H."/>
            <person name="Lovett D.A."/>
            <person name="Lucier A."/>
            <person name="Lucier R.L."/>
            <person name="Ma J."/>
            <person name="Madu R.C."/>
            <person name="Mapua P."/>
            <person name="Martindale A.D."/>
            <person name="Martinez E."/>
            <person name="Massey E."/>
            <person name="Mawhiney S."/>
            <person name="Meador M.G."/>
            <person name="Mendez S."/>
            <person name="Mercado C."/>
            <person name="Mercado I.C."/>
            <person name="Merritt C.E."/>
            <person name="Miner Z.L."/>
            <person name="Minja E."/>
            <person name="Mitchell T."/>
            <person name="Mohabbat F."/>
            <person name="Mohabbat K."/>
            <person name="Montgomery B."/>
            <person name="Moore N."/>
            <person name="Morris S."/>
            <person name="Munidasa M."/>
            <person name="Ngo R.N."/>
            <person name="Nguyen N.B."/>
            <person name="Nickerson E."/>
            <person name="Nwaokelemeh O.O."/>
            <person name="Nwokenkwo S."/>
            <person name="Obregon M."/>
            <person name="Oguh M."/>
            <person name="Oragunye N."/>
            <person name="Oviedo R.J."/>
            <person name="Parish B.J."/>
            <person name="Parker D.N."/>
            <person name="Parrish J."/>
            <person name="Parks K.L."/>
            <person name="Paul H.A."/>
            <person name="Payton B.A."/>
            <person name="Perez A."/>
            <person name="Perrin W."/>
            <person name="Pickens A."/>
            <person name="Primus E.L."/>
            <person name="Pu L.-L."/>
            <person name="Puazo M."/>
            <person name="Quiles M.M."/>
            <person name="Quiroz J.B."/>
            <person name="Rabata D."/>
            <person name="Reeves K."/>
            <person name="Ruiz S.J."/>
            <person name="Shao H."/>
            <person name="Sisson I."/>
            <person name="Sonaike T."/>
            <person name="Sorelle R.P."/>
            <person name="Sutton A.E."/>
            <person name="Svatek A.F."/>
            <person name="Svetz L.A."/>
            <person name="Tamerisa K.S."/>
            <person name="Taylor T.R."/>
            <person name="Teague B."/>
            <person name="Thomas N."/>
            <person name="Thorn R.D."/>
            <person name="Trejos Z.Y."/>
            <person name="Trevino B.K."/>
            <person name="Ukegbu O.N."/>
            <person name="Urban J.B."/>
            <person name="Vasquez L.I."/>
            <person name="Vera V.A."/>
            <person name="Villasana D.M."/>
            <person name="Wang L."/>
            <person name="Ward-Moore S."/>
            <person name="Warren J.T."/>
            <person name="Wei X."/>
            <person name="White F."/>
            <person name="Williamson A.L."/>
            <person name="Wleczyk R."/>
            <person name="Wooden H.S."/>
            <person name="Wooden S.H."/>
            <person name="Yen J."/>
            <person name="Yoon L."/>
            <person name="Yoon V."/>
            <person name="Zorrilla S.E."/>
            <person name="Nelson D."/>
            <person name="Kucherlapati R."/>
            <person name="Weinstock G."/>
            <person name="Gibbs R.A."/>
        </authorList>
    </citation>
    <scope>NUCLEOTIDE SEQUENCE [LARGE SCALE GENOMIC DNA]</scope>
</reference>
<reference key="4">
    <citation type="submission" date="2005-07" db="EMBL/GenBank/DDBJ databases">
        <authorList>
            <person name="Mural R.J."/>
            <person name="Istrail S."/>
            <person name="Sutton G.G."/>
            <person name="Florea L."/>
            <person name="Halpern A.L."/>
            <person name="Mobarry C.M."/>
            <person name="Lippert R."/>
            <person name="Walenz B."/>
            <person name="Shatkay H."/>
            <person name="Dew I."/>
            <person name="Miller J.R."/>
            <person name="Flanigan M.J."/>
            <person name="Edwards N.J."/>
            <person name="Bolanos R."/>
            <person name="Fasulo D."/>
            <person name="Halldorsson B.V."/>
            <person name="Hannenhalli S."/>
            <person name="Turner R."/>
            <person name="Yooseph S."/>
            <person name="Lu F."/>
            <person name="Nusskern D.R."/>
            <person name="Shue B.C."/>
            <person name="Zheng X.H."/>
            <person name="Zhong F."/>
            <person name="Delcher A.L."/>
            <person name="Huson D.H."/>
            <person name="Kravitz S.A."/>
            <person name="Mouchard L."/>
            <person name="Reinert K."/>
            <person name="Remington K.A."/>
            <person name="Clark A.G."/>
            <person name="Waterman M.S."/>
            <person name="Eichler E.E."/>
            <person name="Adams M.D."/>
            <person name="Hunkapiller M.W."/>
            <person name="Myers E.W."/>
            <person name="Venter J.C."/>
        </authorList>
    </citation>
    <scope>NUCLEOTIDE SEQUENCE [LARGE SCALE GENOMIC DNA]</scope>
</reference>
<reference key="5">
    <citation type="journal article" date="2004" name="Genome Res.">
        <title>The status, quality, and expansion of the NIH full-length cDNA project: the Mammalian Gene Collection (MGC).</title>
        <authorList>
            <consortium name="The MGC Project Team"/>
        </authorList>
    </citation>
    <scope>NUCLEOTIDE SEQUENCE [LARGE SCALE MRNA]</scope>
    <source>
        <tissue>Colon</tissue>
    </source>
</reference>
<accession>Q8WUB2</accession>
<accession>A6NH30</accession>
<accession>Q99776</accession>
<feature type="chain" id="PRO_0000288861" description="Protein FAM216A">
    <location>
        <begin position="1"/>
        <end position="273"/>
    </location>
</feature>
<feature type="region of interest" description="Disordered" evidence="1">
    <location>
        <begin position="1"/>
        <end position="47"/>
    </location>
</feature>
<feature type="sequence variant" id="VAR_032513" description="In dbSNP:rs17188964.">
    <original>R</original>
    <variation>G</variation>
    <location>
        <position position="225"/>
    </location>
</feature>
<feature type="sequence conflict" description="In Ref. 1; AAB50215." evidence="2" ref="1">
    <original>R</original>
    <variation>W</variation>
    <location>
        <position position="200"/>
    </location>
</feature>
<organism>
    <name type="scientific">Homo sapiens</name>
    <name type="common">Human</name>
    <dbReference type="NCBI Taxonomy" id="9606"/>
    <lineage>
        <taxon>Eukaryota</taxon>
        <taxon>Metazoa</taxon>
        <taxon>Chordata</taxon>
        <taxon>Craniata</taxon>
        <taxon>Vertebrata</taxon>
        <taxon>Euteleostomi</taxon>
        <taxon>Mammalia</taxon>
        <taxon>Eutheria</taxon>
        <taxon>Euarchontoglires</taxon>
        <taxon>Primates</taxon>
        <taxon>Haplorrhini</taxon>
        <taxon>Catarrhini</taxon>
        <taxon>Hominidae</taxon>
        <taxon>Homo</taxon>
    </lineage>
</organism>
<comment type="similarity">
    <text evidence="2">Belongs to the FAM216 family.</text>
</comment>
<comment type="caution">
    <text evidence="2">It is uncertain whether Met-1 or Met-18 is the initiator.</text>
</comment>
<sequence length="273" mass="30792">MLGQLLPHTARGLGAAEMPGQGPGSDWTERSSSAEPPAVAGTEGGGGGSAGYSCYQNSKGSDRIKDGYKVNSHIAKLQELWKTPQNQTIHLSKSMMEASFFKHPDLTTGQKRYLCSIAKIYNANYLKMLMKRQYMHVLQHSSQKPGVLTHHRSRLSSRYSQKQHYPCTTWRHQLEREDSGSSDIAAASAPEMLIQHSLWRPVRNKEGIKTGYASKTRCKSLKIFRRPRKLFMQTVSSDDSESHMSEEKKEEDLLNNFMQSMSIEEQGEHLMLT</sequence>
<name>F216A_HUMAN</name>
<keyword id="KW-1267">Proteomics identification</keyword>
<keyword id="KW-1185">Reference proteome</keyword>
<proteinExistence type="evidence at protein level"/>
<dbReference type="EMBL" id="U79274">
    <property type="protein sequence ID" value="AAB50215.1"/>
    <property type="molecule type" value="mRNA"/>
</dbReference>
<dbReference type="EMBL" id="CR457001">
    <property type="protein sequence ID" value="CAG33282.1"/>
    <property type="molecule type" value="mRNA"/>
</dbReference>
<dbReference type="EMBL" id="AC002350">
    <property type="status" value="NOT_ANNOTATED_CDS"/>
    <property type="molecule type" value="Genomic_DNA"/>
</dbReference>
<dbReference type="EMBL" id="CH471054">
    <property type="protein sequence ID" value="EAW97917.1"/>
    <property type="molecule type" value="Genomic_DNA"/>
</dbReference>
<dbReference type="EMBL" id="BC020967">
    <property type="protein sequence ID" value="AAH20967.1"/>
    <property type="molecule type" value="mRNA"/>
</dbReference>
<dbReference type="CCDS" id="CCDS31899.1"/>
<dbReference type="RefSeq" id="NP_037432.2">
    <property type="nucleotide sequence ID" value="NM_013300.3"/>
</dbReference>
<dbReference type="BioGRID" id="118951">
    <property type="interactions" value="8"/>
</dbReference>
<dbReference type="FunCoup" id="Q8WUB2">
    <property type="interactions" value="295"/>
</dbReference>
<dbReference type="IntAct" id="Q8WUB2">
    <property type="interactions" value="9"/>
</dbReference>
<dbReference type="MINT" id="Q8WUB2"/>
<dbReference type="STRING" id="9606.ENSP00000366901"/>
<dbReference type="iPTMnet" id="Q8WUB2"/>
<dbReference type="PhosphoSitePlus" id="Q8WUB2"/>
<dbReference type="BioMuta" id="FAM216A"/>
<dbReference type="DMDM" id="74730685"/>
<dbReference type="jPOST" id="Q8WUB2"/>
<dbReference type="MassIVE" id="Q8WUB2"/>
<dbReference type="PaxDb" id="9606-ENSP00000366901"/>
<dbReference type="PeptideAtlas" id="Q8WUB2"/>
<dbReference type="ProteomicsDB" id="74653"/>
<dbReference type="Antibodypedia" id="31011">
    <property type="antibodies" value="106 antibodies from 19 providers"/>
</dbReference>
<dbReference type="DNASU" id="29902"/>
<dbReference type="Ensembl" id="ENST00000377673.10">
    <property type="protein sequence ID" value="ENSP00000366901.5"/>
    <property type="gene ID" value="ENSG00000204856.12"/>
</dbReference>
<dbReference type="GeneID" id="29902"/>
<dbReference type="KEGG" id="hsa:29902"/>
<dbReference type="MANE-Select" id="ENST00000377673.10">
    <property type="protein sequence ID" value="ENSP00000366901.5"/>
    <property type="RefSeq nucleotide sequence ID" value="NM_013300.3"/>
    <property type="RefSeq protein sequence ID" value="NP_037432.2"/>
</dbReference>
<dbReference type="UCSC" id="uc001tqu.5">
    <property type="organism name" value="human"/>
</dbReference>
<dbReference type="AGR" id="HGNC:30180"/>
<dbReference type="CTD" id="29902"/>
<dbReference type="GeneCards" id="FAM216A"/>
<dbReference type="HGNC" id="HGNC:30180">
    <property type="gene designation" value="FAM216A"/>
</dbReference>
<dbReference type="HPA" id="ENSG00000204856">
    <property type="expression patterns" value="Group enriched (brain, testis)"/>
</dbReference>
<dbReference type="MalaCards" id="FAM216A"/>
<dbReference type="neXtProt" id="NX_Q8WUB2"/>
<dbReference type="OpenTargets" id="ENSG00000204856"/>
<dbReference type="PharmGKB" id="PA128395781"/>
<dbReference type="VEuPathDB" id="HostDB:ENSG00000204856"/>
<dbReference type="eggNOG" id="ENOG502SC0D">
    <property type="taxonomic scope" value="Eukaryota"/>
</dbReference>
<dbReference type="GeneTree" id="ENSGT00940000154512"/>
<dbReference type="HOGENOM" id="CLU_096833_0_0_1"/>
<dbReference type="InParanoid" id="Q8WUB2"/>
<dbReference type="OMA" id="KPGRLFM"/>
<dbReference type="OrthoDB" id="5980156at2759"/>
<dbReference type="PAN-GO" id="Q8WUB2">
    <property type="GO annotations" value="0 GO annotations based on evolutionary models"/>
</dbReference>
<dbReference type="PhylomeDB" id="Q8WUB2"/>
<dbReference type="TreeFam" id="TF337546"/>
<dbReference type="PathwayCommons" id="Q8WUB2"/>
<dbReference type="SignaLink" id="Q8WUB2"/>
<dbReference type="BioGRID-ORCS" id="29902">
    <property type="hits" value="10 hits in 1154 CRISPR screens"/>
</dbReference>
<dbReference type="GenomeRNAi" id="29902"/>
<dbReference type="Pharos" id="Q8WUB2">
    <property type="development level" value="Tdark"/>
</dbReference>
<dbReference type="PRO" id="PR:Q8WUB2"/>
<dbReference type="Proteomes" id="UP000005640">
    <property type="component" value="Chromosome 12"/>
</dbReference>
<dbReference type="RNAct" id="Q8WUB2">
    <property type="molecule type" value="protein"/>
</dbReference>
<dbReference type="Bgee" id="ENSG00000204856">
    <property type="expression patterns" value="Expressed in left testis and 168 other cell types or tissues"/>
</dbReference>
<dbReference type="ExpressionAtlas" id="Q8WUB2">
    <property type="expression patterns" value="baseline and differential"/>
</dbReference>
<dbReference type="InterPro" id="IPR029373">
    <property type="entry name" value="FAM216"/>
</dbReference>
<dbReference type="PANTHER" id="PTHR16476">
    <property type="entry name" value="FAMILY WITH SEQUENCE SIMILARITY 216 MEMBER A"/>
    <property type="match status" value="1"/>
</dbReference>
<dbReference type="PANTHER" id="PTHR16476:SF1">
    <property type="entry name" value="PROTEIN FAM216A"/>
    <property type="match status" value="1"/>
</dbReference>
<dbReference type="Pfam" id="PF15107">
    <property type="entry name" value="FAM216B"/>
    <property type="match status" value="1"/>
</dbReference>
<gene>
    <name type="primary">FAM216A</name>
    <name type="synonym">C12orf24</name>
</gene>
<evidence type="ECO:0000256" key="1">
    <source>
        <dbReference type="SAM" id="MobiDB-lite"/>
    </source>
</evidence>
<evidence type="ECO:0000305" key="2"/>
<protein>
    <recommendedName>
        <fullName>Protein FAM216A</fullName>
    </recommendedName>
</protein>